<name>SYFA_BACSU</name>
<feature type="chain" id="PRO_0000126666" description="Phenylalanine--tRNA ligase alpha subunit">
    <location>
        <begin position="1"/>
        <end position="344"/>
    </location>
</feature>
<feature type="binding site" evidence="1">
    <location>
        <position position="256"/>
    </location>
    <ligand>
        <name>Mg(2+)</name>
        <dbReference type="ChEBI" id="CHEBI:18420"/>
        <note>shared with beta subunit</note>
    </ligand>
</feature>
<feature type="sequence conflict" description="In Ref. 1; CAA37224." evidence="2" ref="1">
    <original>GQTIDVTLPGNPVAVG</original>
    <variation>DRQLTSRCREPCCSR</variation>
    <location>
        <begin position="90"/>
        <end position="105"/>
    </location>
</feature>
<gene>
    <name type="primary">pheS</name>
    <name type="ordered locus">BSU28640</name>
</gene>
<sequence length="344" mass="38675">MEEKLKQLEQEALEQVEAASSLKVVNDIRVQYLGKKGPITEVLRGMGKLSAEERPKMGALANEVRERIANAIADKNEKLEEEEMKQKLAGQTIDVTLPGNPVAVGGRHPLTVVIEEIEDLFIGMGYTVEEGPEVETDYYNFESLNLPKEHPARDMQDSFYITEETLMRTQTSPVQTRTMEKHEGKGPVKIICPGKVYRRDNDDATHSHQFMQIEGLVVDKNISMSDLKGTLELVAKKMFGQDREIRLRPSFFPFTEPSVEVDVTCFKCGGNGCSVCKGTGWIEILGAGMVHPNVLKMAGFDPKEYQGFAFGMGVERIAMLKYGIDDIRHFYTNDVRFISQFKQA</sequence>
<dbReference type="EC" id="6.1.1.20"/>
<dbReference type="EMBL" id="X53057">
    <property type="protein sequence ID" value="CAA37224.1"/>
    <property type="molecule type" value="Genomic_DNA"/>
</dbReference>
<dbReference type="EMBL" id="Z75208">
    <property type="protein sequence ID" value="CAA99603.1"/>
    <property type="molecule type" value="Genomic_DNA"/>
</dbReference>
<dbReference type="EMBL" id="AL009126">
    <property type="protein sequence ID" value="CAB14824.1"/>
    <property type="molecule type" value="Genomic_DNA"/>
</dbReference>
<dbReference type="PIR" id="H69675">
    <property type="entry name" value="YFBSA"/>
</dbReference>
<dbReference type="RefSeq" id="NP_390742.1">
    <property type="nucleotide sequence ID" value="NC_000964.3"/>
</dbReference>
<dbReference type="RefSeq" id="WP_004398818.1">
    <property type="nucleotide sequence ID" value="NZ_OZ025638.1"/>
</dbReference>
<dbReference type="SMR" id="P17921"/>
<dbReference type="FunCoup" id="P17921">
    <property type="interactions" value="677"/>
</dbReference>
<dbReference type="STRING" id="224308.BSU28640"/>
<dbReference type="jPOST" id="P17921"/>
<dbReference type="PaxDb" id="224308-BSU28640"/>
<dbReference type="EnsemblBacteria" id="CAB14824">
    <property type="protein sequence ID" value="CAB14824"/>
    <property type="gene ID" value="BSU_28640"/>
</dbReference>
<dbReference type="GeneID" id="937987"/>
<dbReference type="KEGG" id="bsu:BSU28640"/>
<dbReference type="PATRIC" id="fig|224308.179.peg.3111"/>
<dbReference type="eggNOG" id="COG0016">
    <property type="taxonomic scope" value="Bacteria"/>
</dbReference>
<dbReference type="InParanoid" id="P17921"/>
<dbReference type="OrthoDB" id="9800719at2"/>
<dbReference type="PhylomeDB" id="P17921"/>
<dbReference type="BioCyc" id="BSUB:BSU28640-MONOMER"/>
<dbReference type="SABIO-RK" id="P17921"/>
<dbReference type="Proteomes" id="UP000001570">
    <property type="component" value="Chromosome"/>
</dbReference>
<dbReference type="GO" id="GO:0005737">
    <property type="term" value="C:cytoplasm"/>
    <property type="evidence" value="ECO:0000318"/>
    <property type="project" value="GO_Central"/>
</dbReference>
<dbReference type="GO" id="GO:0005524">
    <property type="term" value="F:ATP binding"/>
    <property type="evidence" value="ECO:0007669"/>
    <property type="project" value="UniProtKB-UniRule"/>
</dbReference>
<dbReference type="GO" id="GO:0140096">
    <property type="term" value="F:catalytic activity, acting on a protein"/>
    <property type="evidence" value="ECO:0007669"/>
    <property type="project" value="UniProtKB-ARBA"/>
</dbReference>
<dbReference type="GO" id="GO:0000287">
    <property type="term" value="F:magnesium ion binding"/>
    <property type="evidence" value="ECO:0007669"/>
    <property type="project" value="UniProtKB-UniRule"/>
</dbReference>
<dbReference type="GO" id="GO:0004826">
    <property type="term" value="F:phenylalanine-tRNA ligase activity"/>
    <property type="evidence" value="ECO:0000318"/>
    <property type="project" value="GO_Central"/>
</dbReference>
<dbReference type="GO" id="GO:0016740">
    <property type="term" value="F:transferase activity"/>
    <property type="evidence" value="ECO:0007669"/>
    <property type="project" value="UniProtKB-ARBA"/>
</dbReference>
<dbReference type="GO" id="GO:0000049">
    <property type="term" value="F:tRNA binding"/>
    <property type="evidence" value="ECO:0007669"/>
    <property type="project" value="InterPro"/>
</dbReference>
<dbReference type="GO" id="GO:0006432">
    <property type="term" value="P:phenylalanyl-tRNA aminoacylation"/>
    <property type="evidence" value="ECO:0000318"/>
    <property type="project" value="GO_Central"/>
</dbReference>
<dbReference type="CDD" id="cd00496">
    <property type="entry name" value="PheRS_alpha_core"/>
    <property type="match status" value="1"/>
</dbReference>
<dbReference type="FunFam" id="3.30.930.10:FF:000003">
    <property type="entry name" value="Phenylalanine--tRNA ligase alpha subunit"/>
    <property type="match status" value="1"/>
</dbReference>
<dbReference type="Gene3D" id="3.30.930.10">
    <property type="entry name" value="Bira Bifunctional Protein, Domain 2"/>
    <property type="match status" value="1"/>
</dbReference>
<dbReference type="HAMAP" id="MF_00281">
    <property type="entry name" value="Phe_tRNA_synth_alpha1"/>
    <property type="match status" value="1"/>
</dbReference>
<dbReference type="InterPro" id="IPR006195">
    <property type="entry name" value="aa-tRNA-synth_II"/>
</dbReference>
<dbReference type="InterPro" id="IPR045864">
    <property type="entry name" value="aa-tRNA-synth_II/BPL/LPL"/>
</dbReference>
<dbReference type="InterPro" id="IPR004529">
    <property type="entry name" value="Phe-tRNA-synth_IIc_asu"/>
</dbReference>
<dbReference type="InterPro" id="IPR004188">
    <property type="entry name" value="Phe-tRNA_ligase_II_N"/>
</dbReference>
<dbReference type="InterPro" id="IPR022911">
    <property type="entry name" value="Phe_tRNA_ligase_alpha1_bac"/>
</dbReference>
<dbReference type="InterPro" id="IPR002319">
    <property type="entry name" value="Phenylalanyl-tRNA_Synthase"/>
</dbReference>
<dbReference type="InterPro" id="IPR010978">
    <property type="entry name" value="tRNA-bd_arm"/>
</dbReference>
<dbReference type="NCBIfam" id="TIGR00468">
    <property type="entry name" value="pheS"/>
    <property type="match status" value="1"/>
</dbReference>
<dbReference type="PANTHER" id="PTHR11538:SF41">
    <property type="entry name" value="PHENYLALANINE--TRNA LIGASE, MITOCHONDRIAL"/>
    <property type="match status" value="1"/>
</dbReference>
<dbReference type="PANTHER" id="PTHR11538">
    <property type="entry name" value="PHENYLALANYL-TRNA SYNTHETASE"/>
    <property type="match status" value="1"/>
</dbReference>
<dbReference type="Pfam" id="PF02912">
    <property type="entry name" value="Phe_tRNA-synt_N"/>
    <property type="match status" value="1"/>
</dbReference>
<dbReference type="Pfam" id="PF01409">
    <property type="entry name" value="tRNA-synt_2d"/>
    <property type="match status" value="1"/>
</dbReference>
<dbReference type="SUPFAM" id="SSF55681">
    <property type="entry name" value="Class II aaRS and biotin synthetases"/>
    <property type="match status" value="1"/>
</dbReference>
<dbReference type="SUPFAM" id="SSF46589">
    <property type="entry name" value="tRNA-binding arm"/>
    <property type="match status" value="1"/>
</dbReference>
<dbReference type="PROSITE" id="PS50862">
    <property type="entry name" value="AA_TRNA_LIGASE_II"/>
    <property type="match status" value="1"/>
</dbReference>
<comment type="catalytic activity">
    <reaction>
        <text>tRNA(Phe) + L-phenylalanine + ATP = L-phenylalanyl-tRNA(Phe) + AMP + diphosphate + H(+)</text>
        <dbReference type="Rhea" id="RHEA:19413"/>
        <dbReference type="Rhea" id="RHEA-COMP:9668"/>
        <dbReference type="Rhea" id="RHEA-COMP:9699"/>
        <dbReference type="ChEBI" id="CHEBI:15378"/>
        <dbReference type="ChEBI" id="CHEBI:30616"/>
        <dbReference type="ChEBI" id="CHEBI:33019"/>
        <dbReference type="ChEBI" id="CHEBI:58095"/>
        <dbReference type="ChEBI" id="CHEBI:78442"/>
        <dbReference type="ChEBI" id="CHEBI:78531"/>
        <dbReference type="ChEBI" id="CHEBI:456215"/>
        <dbReference type="EC" id="6.1.1.20"/>
    </reaction>
</comment>
<comment type="cofactor">
    <cofactor evidence="1">
        <name>Mg(2+)</name>
        <dbReference type="ChEBI" id="CHEBI:18420"/>
    </cofactor>
    <text evidence="1">Binds 2 magnesium ions per tetramer.</text>
</comment>
<comment type="subunit">
    <text evidence="1">Tetramer of two alpha and two beta subunits.</text>
</comment>
<comment type="subcellular location">
    <subcellularLocation>
        <location>Cytoplasm</location>
    </subcellularLocation>
</comment>
<comment type="similarity">
    <text evidence="2">Belongs to the class-II aminoacyl-tRNA synthetase family. Phe-tRNA synthetase alpha subunit type 1 subfamily.</text>
</comment>
<keyword id="KW-0030">Aminoacyl-tRNA synthetase</keyword>
<keyword id="KW-0067">ATP-binding</keyword>
<keyword id="KW-0963">Cytoplasm</keyword>
<keyword id="KW-0436">Ligase</keyword>
<keyword id="KW-0460">Magnesium</keyword>
<keyword id="KW-0479">Metal-binding</keyword>
<keyword id="KW-0547">Nucleotide-binding</keyword>
<keyword id="KW-0648">Protein biosynthesis</keyword>
<keyword id="KW-1185">Reference proteome</keyword>
<accession>P17921</accession>
<accession>P94539</accession>
<evidence type="ECO:0000250" key="1"/>
<evidence type="ECO:0000305" key="2"/>
<protein>
    <recommendedName>
        <fullName>Phenylalanine--tRNA ligase alpha subunit</fullName>
        <ecNumber>6.1.1.20</ecNumber>
    </recommendedName>
    <alternativeName>
        <fullName>Phenylalanyl-tRNA synthetase alpha subunit</fullName>
        <shortName>PheRS</shortName>
    </alternativeName>
</protein>
<organism>
    <name type="scientific">Bacillus subtilis (strain 168)</name>
    <dbReference type="NCBI Taxonomy" id="224308"/>
    <lineage>
        <taxon>Bacteria</taxon>
        <taxon>Bacillati</taxon>
        <taxon>Bacillota</taxon>
        <taxon>Bacilli</taxon>
        <taxon>Bacillales</taxon>
        <taxon>Bacillaceae</taxon>
        <taxon>Bacillus</taxon>
    </lineage>
</organism>
<reference key="1">
    <citation type="journal article" date="1990" name="Biochimie">
        <title>Structure and nucleotide sequence of the Bacillus subtilis phenylalanyl-tRNA synthetase genes.</title>
        <authorList>
            <person name="Brakhage A."/>
            <person name="Wozny M."/>
            <person name="Putzer H."/>
        </authorList>
    </citation>
    <scope>NUCLEOTIDE SEQUENCE [GENOMIC DNA]</scope>
    <source>
        <strain>168</strain>
    </source>
</reference>
<reference key="2">
    <citation type="journal article" date="1991" name="Biochimie">
        <authorList>
            <person name="Brakhage A."/>
            <person name="Wozny M."/>
            <person name="Putzer H."/>
        </authorList>
    </citation>
    <scope>ERRATUM OF PUBMED:2127701</scope>
</reference>
<reference key="3">
    <citation type="journal article" date="1996" name="Microbiology">
        <title>The dnaB-pheA (256 degrees-240 degrees) region of the Bacillus subtilis chromosome containing genes responsible for stress responses, the utilization of plant cell walls and primary metabolism.</title>
        <authorList>
            <person name="Wipat A."/>
            <person name="Carter N."/>
            <person name="Brignell C.S."/>
            <person name="Guy J.B."/>
            <person name="Piper K."/>
            <person name="Sanders J."/>
            <person name="Emmerson P.T."/>
            <person name="Harwood C.R."/>
        </authorList>
    </citation>
    <scope>NUCLEOTIDE SEQUENCE [GENOMIC DNA]</scope>
    <source>
        <strain>168</strain>
    </source>
</reference>
<reference key="4">
    <citation type="journal article" date="1997" name="Nature">
        <title>The complete genome sequence of the Gram-positive bacterium Bacillus subtilis.</title>
        <authorList>
            <person name="Kunst F."/>
            <person name="Ogasawara N."/>
            <person name="Moszer I."/>
            <person name="Albertini A.M."/>
            <person name="Alloni G."/>
            <person name="Azevedo V."/>
            <person name="Bertero M.G."/>
            <person name="Bessieres P."/>
            <person name="Bolotin A."/>
            <person name="Borchert S."/>
            <person name="Borriss R."/>
            <person name="Boursier L."/>
            <person name="Brans A."/>
            <person name="Braun M."/>
            <person name="Brignell S.C."/>
            <person name="Bron S."/>
            <person name="Brouillet S."/>
            <person name="Bruschi C.V."/>
            <person name="Caldwell B."/>
            <person name="Capuano V."/>
            <person name="Carter N.M."/>
            <person name="Choi S.-K."/>
            <person name="Codani J.-J."/>
            <person name="Connerton I.F."/>
            <person name="Cummings N.J."/>
            <person name="Daniel R.A."/>
            <person name="Denizot F."/>
            <person name="Devine K.M."/>
            <person name="Duesterhoeft A."/>
            <person name="Ehrlich S.D."/>
            <person name="Emmerson P.T."/>
            <person name="Entian K.-D."/>
            <person name="Errington J."/>
            <person name="Fabret C."/>
            <person name="Ferrari E."/>
            <person name="Foulger D."/>
            <person name="Fritz C."/>
            <person name="Fujita M."/>
            <person name="Fujita Y."/>
            <person name="Fuma S."/>
            <person name="Galizzi A."/>
            <person name="Galleron N."/>
            <person name="Ghim S.-Y."/>
            <person name="Glaser P."/>
            <person name="Goffeau A."/>
            <person name="Golightly E.J."/>
            <person name="Grandi G."/>
            <person name="Guiseppi G."/>
            <person name="Guy B.J."/>
            <person name="Haga K."/>
            <person name="Haiech J."/>
            <person name="Harwood C.R."/>
            <person name="Henaut A."/>
            <person name="Hilbert H."/>
            <person name="Holsappel S."/>
            <person name="Hosono S."/>
            <person name="Hullo M.-F."/>
            <person name="Itaya M."/>
            <person name="Jones L.-M."/>
            <person name="Joris B."/>
            <person name="Karamata D."/>
            <person name="Kasahara Y."/>
            <person name="Klaerr-Blanchard M."/>
            <person name="Klein C."/>
            <person name="Kobayashi Y."/>
            <person name="Koetter P."/>
            <person name="Koningstein G."/>
            <person name="Krogh S."/>
            <person name="Kumano M."/>
            <person name="Kurita K."/>
            <person name="Lapidus A."/>
            <person name="Lardinois S."/>
            <person name="Lauber J."/>
            <person name="Lazarevic V."/>
            <person name="Lee S.-M."/>
            <person name="Levine A."/>
            <person name="Liu H."/>
            <person name="Masuda S."/>
            <person name="Mauel C."/>
            <person name="Medigue C."/>
            <person name="Medina N."/>
            <person name="Mellado R.P."/>
            <person name="Mizuno M."/>
            <person name="Moestl D."/>
            <person name="Nakai S."/>
            <person name="Noback M."/>
            <person name="Noone D."/>
            <person name="O'Reilly M."/>
            <person name="Ogawa K."/>
            <person name="Ogiwara A."/>
            <person name="Oudega B."/>
            <person name="Park S.-H."/>
            <person name="Parro V."/>
            <person name="Pohl T.M."/>
            <person name="Portetelle D."/>
            <person name="Porwollik S."/>
            <person name="Prescott A.M."/>
            <person name="Presecan E."/>
            <person name="Pujic P."/>
            <person name="Purnelle B."/>
            <person name="Rapoport G."/>
            <person name="Rey M."/>
            <person name="Reynolds S."/>
            <person name="Rieger M."/>
            <person name="Rivolta C."/>
            <person name="Rocha E."/>
            <person name="Roche B."/>
            <person name="Rose M."/>
            <person name="Sadaie Y."/>
            <person name="Sato T."/>
            <person name="Scanlan E."/>
            <person name="Schleich S."/>
            <person name="Schroeter R."/>
            <person name="Scoffone F."/>
            <person name="Sekiguchi J."/>
            <person name="Sekowska A."/>
            <person name="Seror S.J."/>
            <person name="Serror P."/>
            <person name="Shin B.-S."/>
            <person name="Soldo B."/>
            <person name="Sorokin A."/>
            <person name="Tacconi E."/>
            <person name="Takagi T."/>
            <person name="Takahashi H."/>
            <person name="Takemaru K."/>
            <person name="Takeuchi M."/>
            <person name="Tamakoshi A."/>
            <person name="Tanaka T."/>
            <person name="Terpstra P."/>
            <person name="Tognoni A."/>
            <person name="Tosato V."/>
            <person name="Uchiyama S."/>
            <person name="Vandenbol M."/>
            <person name="Vannier F."/>
            <person name="Vassarotti A."/>
            <person name="Viari A."/>
            <person name="Wambutt R."/>
            <person name="Wedler E."/>
            <person name="Wedler H."/>
            <person name="Weitzenegger T."/>
            <person name="Winters P."/>
            <person name="Wipat A."/>
            <person name="Yamamoto H."/>
            <person name="Yamane K."/>
            <person name="Yasumoto K."/>
            <person name="Yata K."/>
            <person name="Yoshida K."/>
            <person name="Yoshikawa H.-F."/>
            <person name="Zumstein E."/>
            <person name="Yoshikawa H."/>
            <person name="Danchin A."/>
        </authorList>
    </citation>
    <scope>NUCLEOTIDE SEQUENCE [LARGE SCALE GENOMIC DNA]</scope>
    <source>
        <strain>168</strain>
    </source>
</reference>
<proteinExistence type="inferred from homology"/>